<evidence type="ECO:0000255" key="1">
    <source>
        <dbReference type="PROSITE-ProRule" id="PRU00289"/>
    </source>
</evidence>
<evidence type="ECO:0000269" key="2">
    <source>
    </source>
</evidence>
<evidence type="ECO:0000269" key="3">
    <source>
    </source>
</evidence>
<evidence type="ECO:0000269" key="4">
    <source>
    </source>
</evidence>
<evidence type="ECO:0000269" key="5">
    <source>
    </source>
</evidence>
<evidence type="ECO:0000303" key="6">
    <source>
    </source>
</evidence>
<evidence type="ECO:0000303" key="7">
    <source>
    </source>
</evidence>
<evidence type="ECO:0000303" key="8">
    <source>
    </source>
</evidence>
<evidence type="ECO:0000303" key="9">
    <source>
    </source>
</evidence>
<evidence type="ECO:0000305" key="10"/>
<evidence type="ECO:0000305" key="11">
    <source>
    </source>
</evidence>
<evidence type="ECO:0000305" key="12">
    <source>
    </source>
</evidence>
<evidence type="ECO:0000312" key="13">
    <source>
        <dbReference type="EMBL" id="ABW00334.1"/>
    </source>
</evidence>
<evidence type="ECO:0007744" key="14">
    <source>
        <dbReference type="PDB" id="6OS3"/>
    </source>
</evidence>
<evidence type="ECO:0007744" key="15">
    <source>
        <dbReference type="PDB" id="6OS5"/>
    </source>
</evidence>
<evidence type="ECO:0007744" key="16">
    <source>
        <dbReference type="PDB" id="6OS6"/>
    </source>
</evidence>
<gene>
    <name evidence="6" type="primary">cymD</name>
    <name evidence="13" type="ordered locus">Sare_4565</name>
</gene>
<reference key="1">
    <citation type="submission" date="2007-10" db="EMBL/GenBank/DDBJ databases">
        <title>Complete sequence of Salinispora arenicola CNS-205.</title>
        <authorList>
            <consortium name="US DOE Joint Genome Institute"/>
            <person name="Copeland A."/>
            <person name="Lucas S."/>
            <person name="Lapidus A."/>
            <person name="Barry K."/>
            <person name="Glavina del Rio T."/>
            <person name="Dalin E."/>
            <person name="Tice H."/>
            <person name="Pitluck S."/>
            <person name="Foster B."/>
            <person name="Schmutz J."/>
            <person name="Larimer F."/>
            <person name="Land M."/>
            <person name="Hauser L."/>
            <person name="Kyrpides N."/>
            <person name="Ivanova N."/>
            <person name="Jensen P.R."/>
            <person name="Moore B.S."/>
            <person name="Penn K."/>
            <person name="Jenkins C."/>
            <person name="Udwary D."/>
            <person name="Xiang L."/>
            <person name="Gontang E."/>
            <person name="Richardson P."/>
        </authorList>
    </citation>
    <scope>NUCLEOTIDE SEQUENCE [LARGE SCALE GENOMIC DNA]</scope>
    <source>
        <strain>CNS-205</strain>
    </source>
</reference>
<reference evidence="10" key="2">
    <citation type="journal article" date="2008" name="J. Am. Chem. Soc.">
        <title>Biosynthesis and structures of cyclomarins and cyclomarazines, prenylated cyclic peptides of marine actinobacterial origin.</title>
        <authorList>
            <person name="Schultz A.W."/>
            <person name="Oh D.C."/>
            <person name="Carney J.R."/>
            <person name="Williamson R.T."/>
            <person name="Udwary D.W."/>
            <person name="Jensen P.R."/>
            <person name="Gould S.J."/>
            <person name="Fenical W."/>
            <person name="Moore B.S."/>
        </authorList>
    </citation>
    <scope>FUNCTION</scope>
    <scope>DISRUPTION PHENOTYPE</scope>
</reference>
<reference evidence="10" key="3">
    <citation type="journal article" date="2010" name="J. Nat. Prod.">
        <title>Functional characterization of the cyclomarin/cyclomarazine prenyltransferase CymD directs the biosynthesis of unnatural cyclic peptides.</title>
        <authorList>
            <person name="Schultz A.W."/>
            <person name="Lewis C.A."/>
            <person name="Luzung M.R."/>
            <person name="Baran P.S."/>
            <person name="Moore B.S."/>
        </authorList>
    </citation>
    <scope>FUNCTION</scope>
    <scope>DISRUPTION PHENOTYPE</scope>
</reference>
<reference evidence="10" key="4">
    <citation type="journal article" date="2012" name="Biochemistry">
        <title>Mechanistic studies on CymD: a tryptophan reverse N-prenyltransferase.</title>
        <authorList>
            <person name="Qian Q."/>
            <person name="Schultz A.W."/>
            <person name="Moore B.S."/>
            <person name="Tanner M.E."/>
        </authorList>
    </citation>
    <scope>FUNCTION</scope>
    <scope>BIOPHYSICOCHEMICAL PROPERTIES</scope>
</reference>
<reference evidence="14 15 16" key="5">
    <citation type="journal article" date="2019" name="Biochemistry">
        <title>Structural Basis of Tryptophan Reverse N-Prenylation Catalyzed by CymD.</title>
        <authorList>
            <person name="Roose B.W."/>
            <person name="Christianson D.W."/>
        </authorList>
    </citation>
    <scope>X-RAY CRYSTALLOGRAPHY (1.33 ANGSTROMS) OF 2-373 IN APO FORM AND IN COMPLEXES WITH L-TRYPTOPHAN AND DIMETHYLALLYL S-THIOLODIPHOSPHATE</scope>
    <scope>FUNCTION</scope>
    <scope>ACTIVE SITE</scope>
</reference>
<accession>A8M6W6</accession>
<name>CYMD_SALAI</name>
<organism>
    <name type="scientific">Salinispora arenicola (strain CNS-205)</name>
    <dbReference type="NCBI Taxonomy" id="391037"/>
    <lineage>
        <taxon>Bacteria</taxon>
        <taxon>Bacillati</taxon>
        <taxon>Actinomycetota</taxon>
        <taxon>Actinomycetes</taxon>
        <taxon>Micromonosporales</taxon>
        <taxon>Micromonosporaceae</taxon>
        <taxon>Salinispora</taxon>
    </lineage>
</organism>
<dbReference type="EC" id="2.5.1.-" evidence="2 3 4"/>
<dbReference type="EMBL" id="CP000850">
    <property type="protein sequence ID" value="ABW00334.1"/>
    <property type="molecule type" value="Genomic_DNA"/>
</dbReference>
<dbReference type="PDB" id="6OS3">
    <property type="method" value="X-ray"/>
    <property type="resolution" value="1.70 A"/>
    <property type="chains" value="A/B=2-373"/>
</dbReference>
<dbReference type="PDB" id="6OS5">
    <property type="method" value="X-ray"/>
    <property type="resolution" value="1.66 A"/>
    <property type="chains" value="A/B/C=2-373"/>
</dbReference>
<dbReference type="PDB" id="6OS6">
    <property type="method" value="X-ray"/>
    <property type="resolution" value="1.33 A"/>
    <property type="chains" value="A=2-373"/>
</dbReference>
<dbReference type="PDBsum" id="6OS3"/>
<dbReference type="PDBsum" id="6OS5"/>
<dbReference type="PDBsum" id="6OS6"/>
<dbReference type="SMR" id="A8M6W6"/>
<dbReference type="STRING" id="391037.Sare_4565"/>
<dbReference type="KEGG" id="saq:Sare_4565"/>
<dbReference type="eggNOG" id="COG5424">
    <property type="taxonomic scope" value="Bacteria"/>
</dbReference>
<dbReference type="HOGENOM" id="CLU_062983_0_0_11"/>
<dbReference type="OrthoDB" id="513465at2"/>
<dbReference type="GO" id="GO:0046872">
    <property type="term" value="F:metal ion binding"/>
    <property type="evidence" value="ECO:0007669"/>
    <property type="project" value="UniProtKB-KW"/>
</dbReference>
<dbReference type="GO" id="GO:0016765">
    <property type="term" value="F:transferase activity, transferring alkyl or aryl (other than methyl) groups"/>
    <property type="evidence" value="ECO:0007669"/>
    <property type="project" value="InterPro"/>
</dbReference>
<dbReference type="GO" id="GO:0009820">
    <property type="term" value="P:alkaloid metabolic process"/>
    <property type="evidence" value="ECO:0007669"/>
    <property type="project" value="InterPro"/>
</dbReference>
<dbReference type="CDD" id="cd13930">
    <property type="entry name" value="PT-Tnase"/>
    <property type="match status" value="1"/>
</dbReference>
<dbReference type="InterPro" id="IPR033964">
    <property type="entry name" value="Aro_prenylTrfase"/>
</dbReference>
<dbReference type="InterPro" id="IPR017795">
    <property type="entry name" value="Aro_prenylTrfase_DMATS"/>
</dbReference>
<dbReference type="Pfam" id="PF11991">
    <property type="entry name" value="Trp_DMAT"/>
    <property type="match status" value="1"/>
</dbReference>
<dbReference type="SFLD" id="SFLDS00036">
    <property type="entry name" value="Aromatic_Prenyltransferase"/>
    <property type="match status" value="1"/>
</dbReference>
<protein>
    <recommendedName>
        <fullName evidence="8">Dimethylallyltryptophan synthase CymD</fullName>
    </recommendedName>
    <alternativeName>
        <fullName evidence="7">Cyclomarin/cyclomarazine N-prenyltransferase</fullName>
    </alternativeName>
    <alternativeName>
        <fullName evidence="11">Tryptophan N-prenyltransferase</fullName>
        <ecNumber evidence="2 3 4">2.5.1.-</ecNumber>
    </alternativeName>
</protein>
<proteinExistence type="evidence at protein level"/>
<feature type="chain" id="PRO_0000462573" description="Dimethylallyltryptophan synthase CymD">
    <location>
        <begin position="1"/>
        <end position="373"/>
    </location>
</feature>
<feature type="domain" description="FtsK" evidence="1">
    <location>
        <begin position="346"/>
        <end position="373"/>
    </location>
</feature>
<feature type="active site" description="Nucleophile (Probable)" evidence="9">
    <location>
        <position position="64"/>
    </location>
</feature>
<feature type="binding site" evidence="5 15 16">
    <location>
        <position position="55"/>
    </location>
    <ligand>
        <name>L-tryptophan</name>
        <dbReference type="ChEBI" id="CHEBI:57912"/>
    </ligand>
</feature>
<feature type="binding site" evidence="5 15 16">
    <location>
        <position position="56"/>
    </location>
    <ligand>
        <name>L-tryptophan</name>
        <dbReference type="ChEBI" id="CHEBI:57912"/>
    </ligand>
</feature>
<feature type="binding site" evidence="5 15 16">
    <location>
        <position position="64"/>
    </location>
    <ligand>
        <name>L-tryptophan</name>
        <dbReference type="ChEBI" id="CHEBI:57912"/>
    </ligand>
</feature>
<feature type="binding site" evidence="12 16">
    <location>
        <position position="77"/>
    </location>
    <ligand>
        <name>dimethylallyl diphosphate</name>
        <dbReference type="ChEBI" id="CHEBI:57623"/>
    </ligand>
</feature>
<feature type="binding site" evidence="12 16">
    <location>
        <position position="146"/>
    </location>
    <ligand>
        <name>dimethylallyl diphosphate</name>
        <dbReference type="ChEBI" id="CHEBI:57623"/>
    </ligand>
</feature>
<feature type="binding site" evidence="12 16">
    <location>
        <position position="148"/>
    </location>
    <ligand>
        <name>dimethylallyl diphosphate</name>
        <dbReference type="ChEBI" id="CHEBI:57623"/>
    </ligand>
</feature>
<feature type="binding site" evidence="12 16">
    <location>
        <position position="205"/>
    </location>
    <ligand>
        <name>dimethylallyl diphosphate</name>
        <dbReference type="ChEBI" id="CHEBI:57623"/>
    </ligand>
</feature>
<feature type="binding site" evidence="12 16">
    <location>
        <position position="207"/>
    </location>
    <ligand>
        <name>dimethylallyl diphosphate</name>
        <dbReference type="ChEBI" id="CHEBI:57623"/>
    </ligand>
</feature>
<feature type="binding site" evidence="5 15">
    <location>
        <position position="211"/>
    </location>
    <ligand>
        <name>L-tryptophan</name>
        <dbReference type="ChEBI" id="CHEBI:57912"/>
    </ligand>
</feature>
<feature type="binding site" evidence="12 16">
    <location>
        <position position="274"/>
    </location>
    <ligand>
        <name>dimethylallyl diphosphate</name>
        <dbReference type="ChEBI" id="CHEBI:57623"/>
    </ligand>
</feature>
<feature type="binding site" evidence="5 15 16">
    <location>
        <position position="326"/>
    </location>
    <ligand>
        <name>L-tryptophan</name>
        <dbReference type="ChEBI" id="CHEBI:57912"/>
    </ligand>
</feature>
<feature type="binding site" evidence="12 16">
    <location>
        <position position="337"/>
    </location>
    <ligand>
        <name>dimethylallyl diphosphate</name>
        <dbReference type="ChEBI" id="CHEBI:57623"/>
    </ligand>
</feature>
<feature type="binding site" evidence="12 16">
    <location>
        <position position="339"/>
    </location>
    <ligand>
        <name>dimethylallyl diphosphate</name>
        <dbReference type="ChEBI" id="CHEBI:57623"/>
    </ligand>
</feature>
<feature type="binding site" evidence="12 16">
    <location>
        <position position="341"/>
    </location>
    <ligand>
        <name>dimethylallyl diphosphate</name>
        <dbReference type="ChEBI" id="CHEBI:57623"/>
    </ligand>
</feature>
<comment type="function">
    <text evidence="2 3 4 5">Dimethylallyltryptophan synthase; part of the gene cluster that mediates the biosynthesis of cyclic heptapeptides, known as cyclomarins and also of cyclic dipeptides, called cyclomarazines, which have both antimicrobial and cytotoxic effects (PubMed:18331040, PubMed:20055491). Catalyzes the reverse N-prenylation of monomeric L-tryptophan with dimethylallyl diphosphate (DMAPP) to form N-(1,1-dimethylallyl)-tryptophan (r-N-DMAT) (PubMed:18331040, PubMed:20055491, PubMed:22935004, PubMed:31251043). The formation of r-N-DMAT appears to proceed via the deprotonation of the indole nitrogen of tryptophan, which facilitates a nucleophilic attack on the carbocation that is forming on the dimethylallyl group as the diphosphate dissociates (PubMed:22935004). The N-(1,1-dimethylallyl)-tryptophan produced by CymD is combined with a range of standard and nonproteinogenic amino acid substrates to synthesize the peptides, a process that is probably catalyzed by the non-canonical nonribosomal peptide synthetase (NRPS), CymA (PubMed:18331040, PubMed:20055491). Other proteins in the cluster catalyze further modifications of the peptides including CymV which catalyzes the oxidation of olefinic cyclomarins and cyclomarazines to their respective epoxide derivatives (PubMed:18331040). Utilizes only DMAPP as the prenyl donor and has no requirement for divalent cations (PubMed:20055491).</text>
</comment>
<comment type="biophysicochemical properties">
    <kinetics>
        <KM evidence="4">3.8 uM for L-tryptophan</KM>
        <text evidence="4">kcat is 0.1 sec(-1) with L-tryptophan as substrate.</text>
    </kinetics>
</comment>
<comment type="disruption phenotype">
    <text evidence="2 3">Eliminates cyclomarin and cyclomarazine production and significantly reduces the levels of desprenylcyclomarin C (PubMed:18331040). Accepts exogenous analogs of N-(1,1-dimethylallyl)-tryptophan including N-(1-propargyl)-tryptophan to produce the corresponding cyclomarin and cyclomarazine derivatives (PubMed:20055491).</text>
</comment>
<keyword id="KW-0002">3D-structure</keyword>
<keyword id="KW-0808">Transferase</keyword>
<sequence>MTEELTTVRDACARTLENTARTLHLGASGTEFVAAFRAMTDHWGAARPHDLPLSDVSPDGSPVEYAVDLGGLAPALQFAMEPLTAGVPARDPLAARAIMPLLAGRYGADATRWSALADRLLPDDAHGPHVSMYGAEVRAGAPIRFKAWFYLNVTGPDGAFNLLYSALERMGTTHLWPVVQAHVHRAGEDVPFLLSLDLSDDPAARVKVYFRHFAADVEEVAAVLKAYPGFEPGEVRAFCKVMMGGRRRFSDQPAVTCVSLLDAQTFDRTAATLYVPLWTYAEHDGEVRQRVHRTLAAWPEALYRYDSVLAGIAHRGLDAGTGIHNYISWQPGRTRPRMKVYLSPEMHDVTPPPLGVSQQHHLSGQTTARGRTE</sequence>